<reference key="1">
    <citation type="journal article" date="1999" name="Curr. Microbiol.">
        <title>Cloning of Schizosaccharomyces pombe bio2 by heterologous complementation of a Saccharomyces cerevisiae mutant.</title>
        <authorList>
            <person name="Phalip V."/>
            <person name="Jeltsch J.-M."/>
            <person name="Lemoine Y."/>
        </authorList>
    </citation>
    <scope>NUCLEOTIDE SEQUENCE [MRNA]</scope>
    <scope>FUNCTION</scope>
    <scope>CATALYTIC ACTIVITY</scope>
    <scope>PATHWAY</scope>
    <source>
        <strain>D18</strain>
    </source>
</reference>
<reference key="2">
    <citation type="journal article" date="2002" name="Nature">
        <title>The genome sequence of Schizosaccharomyces pombe.</title>
        <authorList>
            <person name="Wood V."/>
            <person name="Gwilliam R."/>
            <person name="Rajandream M.A."/>
            <person name="Lyne M.H."/>
            <person name="Lyne R."/>
            <person name="Stewart A."/>
            <person name="Sgouros J.G."/>
            <person name="Peat N."/>
            <person name="Hayles J."/>
            <person name="Baker S.G."/>
            <person name="Basham D."/>
            <person name="Bowman S."/>
            <person name="Brooks K."/>
            <person name="Brown D."/>
            <person name="Brown S."/>
            <person name="Chillingworth T."/>
            <person name="Churcher C.M."/>
            <person name="Collins M."/>
            <person name="Connor R."/>
            <person name="Cronin A."/>
            <person name="Davis P."/>
            <person name="Feltwell T."/>
            <person name="Fraser A."/>
            <person name="Gentles S."/>
            <person name="Goble A."/>
            <person name="Hamlin N."/>
            <person name="Harris D.E."/>
            <person name="Hidalgo J."/>
            <person name="Hodgson G."/>
            <person name="Holroyd S."/>
            <person name="Hornsby T."/>
            <person name="Howarth S."/>
            <person name="Huckle E.J."/>
            <person name="Hunt S."/>
            <person name="Jagels K."/>
            <person name="James K.D."/>
            <person name="Jones L."/>
            <person name="Jones M."/>
            <person name="Leather S."/>
            <person name="McDonald S."/>
            <person name="McLean J."/>
            <person name="Mooney P."/>
            <person name="Moule S."/>
            <person name="Mungall K.L."/>
            <person name="Murphy L.D."/>
            <person name="Niblett D."/>
            <person name="Odell C."/>
            <person name="Oliver K."/>
            <person name="O'Neil S."/>
            <person name="Pearson D."/>
            <person name="Quail M.A."/>
            <person name="Rabbinowitsch E."/>
            <person name="Rutherford K.M."/>
            <person name="Rutter S."/>
            <person name="Saunders D."/>
            <person name="Seeger K."/>
            <person name="Sharp S."/>
            <person name="Skelton J."/>
            <person name="Simmonds M.N."/>
            <person name="Squares R."/>
            <person name="Squares S."/>
            <person name="Stevens K."/>
            <person name="Taylor K."/>
            <person name="Taylor R.G."/>
            <person name="Tivey A."/>
            <person name="Walsh S.V."/>
            <person name="Warren T."/>
            <person name="Whitehead S."/>
            <person name="Woodward J.R."/>
            <person name="Volckaert G."/>
            <person name="Aert R."/>
            <person name="Robben J."/>
            <person name="Grymonprez B."/>
            <person name="Weltjens I."/>
            <person name="Vanstreels E."/>
            <person name="Rieger M."/>
            <person name="Schaefer M."/>
            <person name="Mueller-Auer S."/>
            <person name="Gabel C."/>
            <person name="Fuchs M."/>
            <person name="Duesterhoeft A."/>
            <person name="Fritzc C."/>
            <person name="Holzer E."/>
            <person name="Moestl D."/>
            <person name="Hilbert H."/>
            <person name="Borzym K."/>
            <person name="Langer I."/>
            <person name="Beck A."/>
            <person name="Lehrach H."/>
            <person name="Reinhardt R."/>
            <person name="Pohl T.M."/>
            <person name="Eger P."/>
            <person name="Zimmermann W."/>
            <person name="Wedler H."/>
            <person name="Wambutt R."/>
            <person name="Purnelle B."/>
            <person name="Goffeau A."/>
            <person name="Cadieu E."/>
            <person name="Dreano S."/>
            <person name="Gloux S."/>
            <person name="Lelaure V."/>
            <person name="Mottier S."/>
            <person name="Galibert F."/>
            <person name="Aves S.J."/>
            <person name="Xiang Z."/>
            <person name="Hunt C."/>
            <person name="Moore K."/>
            <person name="Hurst S.M."/>
            <person name="Lucas M."/>
            <person name="Rochet M."/>
            <person name="Gaillardin C."/>
            <person name="Tallada V.A."/>
            <person name="Garzon A."/>
            <person name="Thode G."/>
            <person name="Daga R.R."/>
            <person name="Cruzado L."/>
            <person name="Jimenez J."/>
            <person name="Sanchez M."/>
            <person name="del Rey F."/>
            <person name="Benito J."/>
            <person name="Dominguez A."/>
            <person name="Revuelta J.L."/>
            <person name="Moreno S."/>
            <person name="Armstrong J."/>
            <person name="Forsburg S.L."/>
            <person name="Cerutti L."/>
            <person name="Lowe T."/>
            <person name="McCombie W.R."/>
            <person name="Paulsen I."/>
            <person name="Potashkin J."/>
            <person name="Shpakovski G.V."/>
            <person name="Ussery D."/>
            <person name="Barrell B.G."/>
            <person name="Nurse P."/>
        </authorList>
    </citation>
    <scope>NUCLEOTIDE SEQUENCE [LARGE SCALE GENOMIC DNA]</scope>
    <source>
        <strain>972 / ATCC 24843</strain>
    </source>
</reference>
<reference key="3">
    <citation type="journal article" date="2008" name="J. Proteome Res.">
        <title>Phosphoproteome analysis of fission yeast.</title>
        <authorList>
            <person name="Wilson-Grady J.T."/>
            <person name="Villen J."/>
            <person name="Gygi S.P."/>
        </authorList>
    </citation>
    <scope>PHOSPHORYLATION [LARGE SCALE ANALYSIS] AT SER-13; SER-14 AND SER-17</scope>
    <scope>IDENTIFICATION BY MASS SPECTROMETRY</scope>
</reference>
<organism>
    <name type="scientific">Schizosaccharomyces pombe (strain 972 / ATCC 24843)</name>
    <name type="common">Fission yeast</name>
    <dbReference type="NCBI Taxonomy" id="284812"/>
    <lineage>
        <taxon>Eukaryota</taxon>
        <taxon>Fungi</taxon>
        <taxon>Dikarya</taxon>
        <taxon>Ascomycota</taxon>
        <taxon>Taphrinomycotina</taxon>
        <taxon>Schizosaccharomycetes</taxon>
        <taxon>Schizosaccharomycetales</taxon>
        <taxon>Schizosaccharomycetaceae</taxon>
        <taxon>Schizosaccharomyces</taxon>
    </lineage>
</organism>
<proteinExistence type="evidence at protein level"/>
<keyword id="KW-0001">2Fe-2S</keyword>
<keyword id="KW-0004">4Fe-4S</keyword>
<keyword id="KW-0093">Biotin biosynthesis</keyword>
<keyword id="KW-0408">Iron</keyword>
<keyword id="KW-0411">Iron-sulfur</keyword>
<keyword id="KW-0479">Metal-binding</keyword>
<keyword id="KW-0597">Phosphoprotein</keyword>
<keyword id="KW-1185">Reference proteome</keyword>
<keyword id="KW-0949">S-adenosyl-L-methionine</keyword>
<keyword id="KW-0808">Transferase</keyword>
<name>BIOB_SCHPO</name>
<dbReference type="EC" id="2.8.1.6" evidence="6"/>
<dbReference type="EMBL" id="AJ224930">
    <property type="protein sequence ID" value="CAA12229.1"/>
    <property type="molecule type" value="mRNA"/>
</dbReference>
<dbReference type="EMBL" id="CU329672">
    <property type="protein sequence ID" value="CAA18303.1"/>
    <property type="molecule type" value="Genomic_DNA"/>
</dbReference>
<dbReference type="PIR" id="T40876">
    <property type="entry name" value="T40876"/>
</dbReference>
<dbReference type="RefSeq" id="NP_587728.1">
    <property type="nucleotide sequence ID" value="NM_001022723.2"/>
</dbReference>
<dbReference type="SMR" id="O59778"/>
<dbReference type="BioGRID" id="275301">
    <property type="interactions" value="35"/>
</dbReference>
<dbReference type="FunCoup" id="O59778">
    <property type="interactions" value="146"/>
</dbReference>
<dbReference type="STRING" id="284812.O59778"/>
<dbReference type="iPTMnet" id="O59778"/>
<dbReference type="PaxDb" id="4896-SPCC1235.02.1"/>
<dbReference type="EnsemblFungi" id="SPCC1235.02.1">
    <property type="protein sequence ID" value="SPCC1235.02.1:pep"/>
    <property type="gene ID" value="SPCC1235.02"/>
</dbReference>
<dbReference type="GeneID" id="2538717"/>
<dbReference type="KEGG" id="spo:2538717"/>
<dbReference type="PomBase" id="SPCC1235.02">
    <property type="gene designation" value="bio2"/>
</dbReference>
<dbReference type="VEuPathDB" id="FungiDB:SPCC1235.02"/>
<dbReference type="eggNOG" id="KOG2900">
    <property type="taxonomic scope" value="Eukaryota"/>
</dbReference>
<dbReference type="HOGENOM" id="CLU_033172_1_2_1"/>
<dbReference type="InParanoid" id="O59778"/>
<dbReference type="OMA" id="NICTTHT"/>
<dbReference type="PhylomeDB" id="O59778"/>
<dbReference type="UniPathway" id="UPA00078">
    <property type="reaction ID" value="UER00162"/>
</dbReference>
<dbReference type="PRO" id="PR:O59778"/>
<dbReference type="Proteomes" id="UP000002485">
    <property type="component" value="Chromosome III"/>
</dbReference>
<dbReference type="GO" id="GO:0005739">
    <property type="term" value="C:mitochondrion"/>
    <property type="evidence" value="ECO:0007005"/>
    <property type="project" value="PomBase"/>
</dbReference>
<dbReference type="GO" id="GO:0051537">
    <property type="term" value="F:2 iron, 2 sulfur cluster binding"/>
    <property type="evidence" value="ECO:0000318"/>
    <property type="project" value="GO_Central"/>
</dbReference>
<dbReference type="GO" id="GO:0051539">
    <property type="term" value="F:4 iron, 4 sulfur cluster binding"/>
    <property type="evidence" value="ECO:0007669"/>
    <property type="project" value="UniProtKB-KW"/>
</dbReference>
<dbReference type="GO" id="GO:0004076">
    <property type="term" value="F:biotin synthase activity"/>
    <property type="evidence" value="ECO:0000316"/>
    <property type="project" value="PomBase"/>
</dbReference>
<dbReference type="GO" id="GO:0046872">
    <property type="term" value="F:metal ion binding"/>
    <property type="evidence" value="ECO:0007669"/>
    <property type="project" value="UniProtKB-KW"/>
</dbReference>
<dbReference type="GO" id="GO:0009102">
    <property type="term" value="P:biotin biosynthetic process"/>
    <property type="evidence" value="ECO:0000316"/>
    <property type="project" value="PomBase"/>
</dbReference>
<dbReference type="CDD" id="cd01335">
    <property type="entry name" value="Radical_SAM"/>
    <property type="match status" value="1"/>
</dbReference>
<dbReference type="FunFam" id="3.20.20.70:FF:000011">
    <property type="entry name" value="Biotin synthase"/>
    <property type="match status" value="1"/>
</dbReference>
<dbReference type="Gene3D" id="3.20.20.70">
    <property type="entry name" value="Aldolase class I"/>
    <property type="match status" value="1"/>
</dbReference>
<dbReference type="HAMAP" id="MF_01694">
    <property type="entry name" value="BioB"/>
    <property type="match status" value="1"/>
</dbReference>
<dbReference type="InterPro" id="IPR013785">
    <property type="entry name" value="Aldolase_TIM"/>
</dbReference>
<dbReference type="InterPro" id="IPR010722">
    <property type="entry name" value="BATS_dom"/>
</dbReference>
<dbReference type="InterPro" id="IPR002684">
    <property type="entry name" value="Biotin_synth/BioAB"/>
</dbReference>
<dbReference type="InterPro" id="IPR024177">
    <property type="entry name" value="Biotin_synthase"/>
</dbReference>
<dbReference type="InterPro" id="IPR006638">
    <property type="entry name" value="Elp3/MiaA/NifB-like_rSAM"/>
</dbReference>
<dbReference type="InterPro" id="IPR007197">
    <property type="entry name" value="rSAM"/>
</dbReference>
<dbReference type="NCBIfam" id="TIGR00433">
    <property type="entry name" value="bioB"/>
    <property type="match status" value="1"/>
</dbReference>
<dbReference type="PANTHER" id="PTHR22976">
    <property type="entry name" value="BIOTIN SYNTHASE"/>
    <property type="match status" value="1"/>
</dbReference>
<dbReference type="PANTHER" id="PTHR22976:SF2">
    <property type="entry name" value="BIOTIN SYNTHASE, MITOCHONDRIAL"/>
    <property type="match status" value="1"/>
</dbReference>
<dbReference type="Pfam" id="PF06968">
    <property type="entry name" value="BATS"/>
    <property type="match status" value="1"/>
</dbReference>
<dbReference type="Pfam" id="PF04055">
    <property type="entry name" value="Radical_SAM"/>
    <property type="match status" value="1"/>
</dbReference>
<dbReference type="PIRSF" id="PIRSF001619">
    <property type="entry name" value="Biotin_synth"/>
    <property type="match status" value="1"/>
</dbReference>
<dbReference type="SFLD" id="SFLDG01060">
    <property type="entry name" value="BATS_domain_containing"/>
    <property type="match status" value="1"/>
</dbReference>
<dbReference type="SFLD" id="SFLDF00272">
    <property type="entry name" value="biotin_synthase"/>
    <property type="match status" value="1"/>
</dbReference>
<dbReference type="SMART" id="SM00876">
    <property type="entry name" value="BATS"/>
    <property type="match status" value="1"/>
</dbReference>
<dbReference type="SMART" id="SM00729">
    <property type="entry name" value="Elp3"/>
    <property type="match status" value="1"/>
</dbReference>
<dbReference type="SUPFAM" id="SSF102114">
    <property type="entry name" value="Radical SAM enzymes"/>
    <property type="match status" value="1"/>
</dbReference>
<dbReference type="PROSITE" id="PS51918">
    <property type="entry name" value="RADICAL_SAM"/>
    <property type="match status" value="1"/>
</dbReference>
<sequence>MFTRTIRQQIRRSSALSLVRNNWTREEIQKIYDTPLIDLIFRAASIHRKFHDPKKVQQCTLLSIKTGGCTEDCKYCAQSSRYNTGVKATKLMKIDEVLEKAKIAKAKGSTRFCMGSAWRDLNGRNRTFKNILEIIKEVRSMDMEVCVTLGMLNEQQAKELKDAGLTAYNHNLDTSREYYSKIISTRTYDERLNTIDNLRKAGLKVCSGGILGLGEKKHDRVGLIHSLATMPTHPESVPFNLLVPIPGTPVGDAVKERLPIHPFLRSIATARICMPKTIIRFAAGRNTCSESEQALAFMAGANAVFTGEKMLTTPAVSWDSDSQLFYNWGLEGMQSFEYGTSTEGEDGTFTLPPKERLAPSPSL</sequence>
<evidence type="ECO:0000250" key="1"/>
<evidence type="ECO:0000255" key="2">
    <source>
        <dbReference type="PROSITE-ProRule" id="PRU01266"/>
    </source>
</evidence>
<evidence type="ECO:0000256" key="3">
    <source>
        <dbReference type="SAM" id="MobiDB-lite"/>
    </source>
</evidence>
<evidence type="ECO:0000269" key="4">
    <source>
    </source>
</evidence>
<evidence type="ECO:0000305" key="5"/>
<evidence type="ECO:0000305" key="6">
    <source>
    </source>
</evidence>
<comment type="function">
    <text evidence="6">Catalyzes the last step of biotin biosynthesis, the conversion of dethiobiotin to biotin.</text>
</comment>
<comment type="catalytic activity">
    <reaction evidence="6">
        <text>(4R,5S)-dethiobiotin + (sulfur carrier)-SH + 2 reduced [2Fe-2S]-[ferredoxin] + 2 S-adenosyl-L-methionine = (sulfur carrier)-H + biotin + 2 5'-deoxyadenosine + 2 L-methionine + 2 oxidized [2Fe-2S]-[ferredoxin]</text>
        <dbReference type="Rhea" id="RHEA:22060"/>
        <dbReference type="Rhea" id="RHEA-COMP:10000"/>
        <dbReference type="Rhea" id="RHEA-COMP:10001"/>
        <dbReference type="Rhea" id="RHEA-COMP:14737"/>
        <dbReference type="Rhea" id="RHEA-COMP:14739"/>
        <dbReference type="ChEBI" id="CHEBI:17319"/>
        <dbReference type="ChEBI" id="CHEBI:29917"/>
        <dbReference type="ChEBI" id="CHEBI:33737"/>
        <dbReference type="ChEBI" id="CHEBI:33738"/>
        <dbReference type="ChEBI" id="CHEBI:57586"/>
        <dbReference type="ChEBI" id="CHEBI:57844"/>
        <dbReference type="ChEBI" id="CHEBI:59789"/>
        <dbReference type="ChEBI" id="CHEBI:64428"/>
        <dbReference type="ChEBI" id="CHEBI:149473"/>
        <dbReference type="EC" id="2.8.1.6"/>
    </reaction>
    <physiologicalReaction direction="left-to-right" evidence="6">
        <dbReference type="Rhea" id="RHEA:22061"/>
    </physiologicalReaction>
</comment>
<comment type="cofactor">
    <cofactor evidence="1">
        <name>[4Fe-4S] cluster</name>
        <dbReference type="ChEBI" id="CHEBI:49883"/>
    </cofactor>
    <text evidence="1">Binds 1 [4Fe-4S] cluster. The cluster is coordinated with 3 cysteines and an exchangeable S-adenosyl-L-methionine.</text>
</comment>
<comment type="cofactor">
    <cofactor evidence="1">
        <name>[2Fe-2S] cluster</name>
        <dbReference type="ChEBI" id="CHEBI:190135"/>
    </cofactor>
    <text evidence="1">Binds 1 [2Fe-2S] cluster. The cluster is coordinated with 3 cysteines and 1 arginine.</text>
</comment>
<comment type="pathway">
    <text evidence="6">Cofactor biosynthesis; biotin biosynthesis; biotin from 7,8-diaminononanoate: step 2/2.</text>
</comment>
<comment type="similarity">
    <text evidence="5">Belongs to the radical SAM superfamily. Biotin synthase family.</text>
</comment>
<feature type="chain" id="PRO_0000185566" description="Biotin synthase">
    <location>
        <begin position="1"/>
        <end position="363"/>
    </location>
</feature>
<feature type="domain" description="Radical SAM core" evidence="2">
    <location>
        <begin position="54"/>
        <end position="276"/>
    </location>
</feature>
<feature type="region of interest" description="Disordered" evidence="3">
    <location>
        <begin position="337"/>
        <end position="363"/>
    </location>
</feature>
<feature type="binding site" evidence="1">
    <location>
        <position position="69"/>
    </location>
    <ligand>
        <name>[4Fe-4S] cluster</name>
        <dbReference type="ChEBI" id="CHEBI:49883"/>
        <note>4Fe-4S-S-AdoMet</note>
    </ligand>
</feature>
<feature type="binding site" evidence="1">
    <location>
        <position position="73"/>
    </location>
    <ligand>
        <name>[4Fe-4S] cluster</name>
        <dbReference type="ChEBI" id="CHEBI:49883"/>
        <note>4Fe-4S-S-AdoMet</note>
    </ligand>
</feature>
<feature type="binding site" evidence="1">
    <location>
        <position position="76"/>
    </location>
    <ligand>
        <name>[4Fe-4S] cluster</name>
        <dbReference type="ChEBI" id="CHEBI:49883"/>
        <note>4Fe-4S-S-AdoMet</note>
    </ligand>
</feature>
<feature type="binding site" evidence="1">
    <location>
        <position position="113"/>
    </location>
    <ligand>
        <name>[2Fe-2S] cluster</name>
        <dbReference type="ChEBI" id="CHEBI:190135"/>
    </ligand>
</feature>
<feature type="binding site" evidence="1">
    <location>
        <position position="146"/>
    </location>
    <ligand>
        <name>[2Fe-2S] cluster</name>
        <dbReference type="ChEBI" id="CHEBI:190135"/>
    </ligand>
</feature>
<feature type="binding site" evidence="1">
    <location>
        <position position="206"/>
    </location>
    <ligand>
        <name>[2Fe-2S] cluster</name>
        <dbReference type="ChEBI" id="CHEBI:190135"/>
    </ligand>
</feature>
<feature type="binding site" evidence="1">
    <location>
        <position position="280"/>
    </location>
    <ligand>
        <name>[2Fe-2S] cluster</name>
        <dbReference type="ChEBI" id="CHEBI:190135"/>
    </ligand>
</feature>
<feature type="modified residue" description="Phosphoserine" evidence="4">
    <location>
        <position position="13"/>
    </location>
</feature>
<feature type="modified residue" description="Phosphoserine" evidence="4">
    <location>
        <position position="14"/>
    </location>
</feature>
<feature type="modified residue" description="Phosphoserine" evidence="4">
    <location>
        <position position="17"/>
    </location>
</feature>
<feature type="sequence conflict" description="In Ref. 1; CAA12229." evidence="5" ref="1">
    <original>SS</original>
    <variation>FF</variation>
    <location>
        <begin position="13"/>
        <end position="14"/>
    </location>
</feature>
<feature type="sequence conflict" description="In Ref. 1; CAA12229." evidence="5" ref="1">
    <original>S</original>
    <variation>F</variation>
    <location>
        <position position="17"/>
    </location>
</feature>
<feature type="sequence conflict" description="In Ref. 1; CAA12229." evidence="5" ref="1">
    <original>TTPAVSW</original>
    <variation>LLLLFL</variation>
    <location>
        <begin position="312"/>
        <end position="318"/>
    </location>
</feature>
<gene>
    <name type="primary">bio2</name>
    <name type="ORF">SPCC1235.02</name>
    <name type="ORF">SPCC320.01c</name>
</gene>
<protein>
    <recommendedName>
        <fullName>Biotin synthase</fullName>
        <ecNumber evidence="6">2.8.1.6</ecNumber>
    </recommendedName>
</protein>
<accession>O59778</accession>
<accession>O60050</accession>